<protein>
    <recommendedName>
        <fullName evidence="4">Lyso-glycine lipid O-acyltransferase</fullName>
        <shortName evidence="4">Lyso-GL O-acyltransferase</shortName>
        <ecNumber evidence="4">2.3.1.-</ecNumber>
    </recommendedName>
</protein>
<gene>
    <name evidence="2" type="primary">glsA</name>
    <name evidence="5" type="ordered locus">BT_3458</name>
</gene>
<organism>
    <name type="scientific">Bacteroides thetaiotaomicron (strain ATCC 29148 / DSM 2079 / JCM 5827 / CCUG 10774 / NCTC 10582 / VPI-5482 / E50)</name>
    <dbReference type="NCBI Taxonomy" id="226186"/>
    <lineage>
        <taxon>Bacteria</taxon>
        <taxon>Pseudomonadati</taxon>
        <taxon>Bacteroidota</taxon>
        <taxon>Bacteroidia</taxon>
        <taxon>Bacteroidales</taxon>
        <taxon>Bacteroidaceae</taxon>
        <taxon>Bacteroides</taxon>
    </lineage>
</organism>
<comment type="function">
    <text evidence="1">Is involved in the production of glycine lipids (GL), which are phosphorus-free membrane lipids important for fitness during growth of the human gut bacterium B.thetaiotaomicron in vivo and in vitro. Catalyzes the second step of GL biosynthesis, i.e. the O-acylation of the hydroxyl group of lyso-glycine lipids, resulting in the production of the mature diacylated glycine lipids.</text>
</comment>
<comment type="catalytic activity">
    <reaction evidence="4">
        <text>a lyso-glycine lipid + a fatty acyl-[ACP] = a glycine lipid + holo-[ACP]</text>
        <dbReference type="Rhea" id="RHEA:80951"/>
        <dbReference type="Rhea" id="RHEA-COMP:9685"/>
        <dbReference type="Rhea" id="RHEA-COMP:14125"/>
        <dbReference type="ChEBI" id="CHEBI:64479"/>
        <dbReference type="ChEBI" id="CHEBI:138651"/>
        <dbReference type="ChEBI" id="CHEBI:231742"/>
        <dbReference type="ChEBI" id="CHEBI:231744"/>
    </reaction>
    <physiologicalReaction direction="left-to-right" evidence="1">
        <dbReference type="Rhea" id="RHEA:80952"/>
    </physiologicalReaction>
</comment>
<comment type="catalytic activity">
    <reaction evidence="4">
        <text>N-[(3R)-3-hydroxyhexadecanoyl]-glycine + hexadecanoyl-[ACP] = N-[(3R)-3-(hexadecanoyloxy)hexadecanoyl]-glycine + holo-[ACP]</text>
        <dbReference type="Rhea" id="RHEA:80959"/>
        <dbReference type="Rhea" id="RHEA-COMP:9652"/>
        <dbReference type="Rhea" id="RHEA-COMP:9685"/>
        <dbReference type="ChEBI" id="CHEBI:64479"/>
        <dbReference type="ChEBI" id="CHEBI:78483"/>
        <dbReference type="ChEBI" id="CHEBI:231743"/>
        <dbReference type="ChEBI" id="CHEBI:231745"/>
    </reaction>
    <physiologicalReaction direction="left-to-right" evidence="1">
        <dbReference type="Rhea" id="RHEA:80960"/>
    </physiologicalReaction>
</comment>
<comment type="pathway">
    <text evidence="1">Lipid metabolism.</text>
</comment>
<comment type="induction">
    <text evidence="1">Is constitutively expressed.</text>
</comment>
<comment type="similarity">
    <text evidence="3">Belongs to the O-acyltransferase GlsA family.</text>
</comment>
<evidence type="ECO:0000269" key="1">
    <source>
    </source>
</evidence>
<evidence type="ECO:0000303" key="2">
    <source>
    </source>
</evidence>
<evidence type="ECO:0000305" key="3"/>
<evidence type="ECO:0000305" key="4">
    <source>
    </source>
</evidence>
<evidence type="ECO:0000312" key="5">
    <source>
        <dbReference type="EMBL" id="AAO78564.1"/>
    </source>
</evidence>
<proteinExistence type="evidence at transcript level"/>
<keyword id="KW-0012">Acyltransferase</keyword>
<keyword id="KW-0444">Lipid biosynthesis</keyword>
<keyword id="KW-0443">Lipid metabolism</keyword>
<keyword id="KW-1185">Reference proteome</keyword>
<keyword id="KW-0808">Transferase</keyword>
<sequence>MTDDSLFLIDVDKILRTKAPKQYKYIPKFVVSYLKKIVHQDEINVFLNESKDKLGVDFLEACMEFLDAKVEVKGIENLPKEGLYTFVSNHPLGGQDGVALGYVLGRHYDGKVKYLVNDLLMNLRGLAPLCVPINKTGKQAKDFPKMVEAGFQSDDQMIMFPAGLCSRRQNGVIRDLEWKKTFIIKSIQAKRDVVPVHFGGRNSDFFYNLANVCKALGIKFNIAMLYLADEMFKNRHKTFTVTFGKPIPWQTFDKSKTPAQWAEYVKDIVYKL</sequence>
<reference key="1">
    <citation type="journal article" date="2003" name="Science">
        <title>A genomic view of the human-Bacteroides thetaiotaomicron symbiosis.</title>
        <authorList>
            <person name="Xu J."/>
            <person name="Bjursell M.K."/>
            <person name="Himrod J."/>
            <person name="Deng S."/>
            <person name="Carmichael L.K."/>
            <person name="Chiang H.C."/>
            <person name="Hooper L.V."/>
            <person name="Gordon J.I."/>
        </authorList>
    </citation>
    <scope>NUCLEOTIDE SEQUENCE [LARGE SCALE GENOMIC DNA]</scope>
    <source>
        <strain>ATCC 29148 / DSM 2079 / JCM 5827 / CCUG 10774 / NCTC 10582 / VPI-5482 / E50</strain>
    </source>
</reference>
<reference key="2">
    <citation type="journal article" date="2009" name="Proc. Natl. Acad. Sci. U.S.A.">
        <title>Characterizing a model human gut microbiota composed of members of its two dominant bacterial phyla.</title>
        <authorList>
            <person name="Mahowald M.A."/>
            <person name="Rey F.E."/>
            <person name="Seedorf H."/>
            <person name="Turnbaugh P.J."/>
            <person name="Fulton R.S."/>
            <person name="Wollam A."/>
            <person name="Shah N."/>
            <person name="Wang C."/>
            <person name="Magrini V."/>
            <person name="Wilson R.K."/>
            <person name="Cantarel B.L."/>
            <person name="Coutinho P.M."/>
            <person name="Henrissat B."/>
            <person name="Crock L.W."/>
            <person name="Russell A."/>
            <person name="Verberkmoes N.C."/>
            <person name="Hettich R.L."/>
            <person name="Gordon J.I."/>
        </authorList>
    </citation>
    <scope>NUCLEOTIDE SEQUENCE [LARGE SCALE GENOMIC DNA]</scope>
    <source>
        <strain>ATCC 29148 / DSM 2079 / JCM 5827 / CCUG 10774 / NCTC 10582 / VPI-5482 / E50</strain>
    </source>
</reference>
<reference key="3">
    <citation type="journal article" date="2019" name="Appl. Environ. Microbiol.">
        <title>The Glycine Lipids of Bacteroides thetaiotaomicron Are Important for Fitness during Growth In Vivo and In Vitro.</title>
        <authorList>
            <person name="Lynch A."/>
            <person name="Tammireddy S.R."/>
            <person name="Doherty M.K."/>
            <person name="Whitfield P.D."/>
            <person name="Clarke D.J."/>
        </authorList>
    </citation>
    <scope>FUNCTION</scope>
    <scope>INDUCTION</scope>
    <scope>PATHWAY</scope>
    <source>
        <strain>ATCC 29148 / DSM 2079 / JCM 5827 / CCUG 10774 / NCTC 10582 / VPI-5482 / E50</strain>
    </source>
</reference>
<name>GLSAA_BACTN</name>
<accession>Q8A248</accession>
<feature type="chain" id="PRO_0000461302" description="Lyso-glycine lipid O-acyltransferase">
    <location>
        <begin position="1"/>
        <end position="272"/>
    </location>
</feature>
<dbReference type="EC" id="2.3.1.-" evidence="4"/>
<dbReference type="EMBL" id="AE015928">
    <property type="protein sequence ID" value="AAO78564.1"/>
    <property type="molecule type" value="Genomic_DNA"/>
</dbReference>
<dbReference type="RefSeq" id="NP_812370.1">
    <property type="nucleotide sequence ID" value="NC_004663.1"/>
</dbReference>
<dbReference type="RefSeq" id="WP_011108841.1">
    <property type="nucleotide sequence ID" value="NZ_UYXG01000003.1"/>
</dbReference>
<dbReference type="STRING" id="226186.BT_3458"/>
<dbReference type="PaxDb" id="226186-BT_3458"/>
<dbReference type="EnsemblBacteria" id="AAO78564">
    <property type="protein sequence ID" value="AAO78564"/>
    <property type="gene ID" value="BT_3458"/>
</dbReference>
<dbReference type="KEGG" id="bth:BT_3458"/>
<dbReference type="PATRIC" id="fig|226186.12.peg.3525"/>
<dbReference type="eggNOG" id="COG0204">
    <property type="taxonomic scope" value="Bacteria"/>
</dbReference>
<dbReference type="HOGENOM" id="CLU_067500_1_0_10"/>
<dbReference type="InParanoid" id="Q8A248"/>
<dbReference type="OrthoDB" id="1113830at2"/>
<dbReference type="Proteomes" id="UP000001414">
    <property type="component" value="Chromosome"/>
</dbReference>
<dbReference type="GO" id="GO:0016746">
    <property type="term" value="F:acyltransferase activity"/>
    <property type="evidence" value="ECO:0007669"/>
    <property type="project" value="UniProtKB-KW"/>
</dbReference>
<dbReference type="GO" id="GO:0006629">
    <property type="term" value="P:lipid metabolic process"/>
    <property type="evidence" value="ECO:0007669"/>
    <property type="project" value="UniProtKB-KW"/>
</dbReference>
<dbReference type="InterPro" id="IPR045746">
    <property type="entry name" value="ACT14924-like_Acyltransf_dom"/>
</dbReference>
<dbReference type="Pfam" id="PF19576">
    <property type="entry name" value="Acyltransf_2"/>
    <property type="match status" value="1"/>
</dbReference>
<dbReference type="SUPFAM" id="SSF69593">
    <property type="entry name" value="Glycerol-3-phosphate (1)-acyltransferase"/>
    <property type="match status" value="1"/>
</dbReference>